<accession>B5FFD6</accession>
<evidence type="ECO:0000255" key="1">
    <source>
        <dbReference type="HAMAP-Rule" id="MF_00366"/>
    </source>
</evidence>
<evidence type="ECO:0000256" key="2">
    <source>
        <dbReference type="SAM" id="MobiDB-lite"/>
    </source>
</evidence>
<organism>
    <name type="scientific">Aliivibrio fischeri (strain MJ11)</name>
    <name type="common">Vibrio fischeri</name>
    <dbReference type="NCBI Taxonomy" id="388396"/>
    <lineage>
        <taxon>Bacteria</taxon>
        <taxon>Pseudomonadati</taxon>
        <taxon>Pseudomonadota</taxon>
        <taxon>Gammaproteobacteria</taxon>
        <taxon>Vibrionales</taxon>
        <taxon>Vibrionaceae</taxon>
        <taxon>Aliivibrio</taxon>
    </lineage>
</organism>
<protein>
    <recommendedName>
        <fullName evidence="1">DNA-directed RNA polymerase subunit omega</fullName>
        <shortName evidence="1">RNAP omega subunit</shortName>
        <ecNumber evidence="1">2.7.7.6</ecNumber>
    </recommendedName>
    <alternativeName>
        <fullName evidence="1">RNA polymerase omega subunit</fullName>
    </alternativeName>
    <alternativeName>
        <fullName evidence="1">Transcriptase subunit omega</fullName>
    </alternativeName>
</protein>
<keyword id="KW-0240">DNA-directed RNA polymerase</keyword>
<keyword id="KW-0548">Nucleotidyltransferase</keyword>
<keyword id="KW-0804">Transcription</keyword>
<keyword id="KW-0808">Transferase</keyword>
<comment type="function">
    <text evidence="1">Promotes RNA polymerase assembly. Latches the N- and C-terminal regions of the beta' subunit thereby facilitating its interaction with the beta and alpha subunits.</text>
</comment>
<comment type="catalytic activity">
    <reaction evidence="1">
        <text>RNA(n) + a ribonucleoside 5'-triphosphate = RNA(n+1) + diphosphate</text>
        <dbReference type="Rhea" id="RHEA:21248"/>
        <dbReference type="Rhea" id="RHEA-COMP:14527"/>
        <dbReference type="Rhea" id="RHEA-COMP:17342"/>
        <dbReference type="ChEBI" id="CHEBI:33019"/>
        <dbReference type="ChEBI" id="CHEBI:61557"/>
        <dbReference type="ChEBI" id="CHEBI:140395"/>
        <dbReference type="EC" id="2.7.7.6"/>
    </reaction>
</comment>
<comment type="subunit">
    <text evidence="1">The RNAP catalytic core consists of 2 alpha, 1 beta, 1 beta' and 1 omega subunit. When a sigma factor is associated with the core the holoenzyme is formed, which can initiate transcription.</text>
</comment>
<comment type="similarity">
    <text evidence="1">Belongs to the RNA polymerase subunit omega family.</text>
</comment>
<reference key="1">
    <citation type="submission" date="2008-08" db="EMBL/GenBank/DDBJ databases">
        <title>Complete sequence of Vibrio fischeri strain MJ11.</title>
        <authorList>
            <person name="Mandel M.J."/>
            <person name="Stabb E.V."/>
            <person name="Ruby E.G."/>
            <person name="Ferriera S."/>
            <person name="Johnson J."/>
            <person name="Kravitz S."/>
            <person name="Beeson K."/>
            <person name="Sutton G."/>
            <person name="Rogers Y.-H."/>
            <person name="Friedman R."/>
            <person name="Frazier M."/>
            <person name="Venter J.C."/>
        </authorList>
    </citation>
    <scope>NUCLEOTIDE SEQUENCE [LARGE SCALE GENOMIC DNA]</scope>
    <source>
        <strain>MJ11</strain>
    </source>
</reference>
<name>RPOZ_ALIFM</name>
<gene>
    <name evidence="1" type="primary">rpoZ</name>
    <name type="ordered locus">VFMJ11_0103</name>
</gene>
<feature type="chain" id="PRO_1000121288" description="DNA-directed RNA polymerase subunit omega">
    <location>
        <begin position="1"/>
        <end position="90"/>
    </location>
</feature>
<feature type="region of interest" description="Disordered" evidence="2">
    <location>
        <begin position="69"/>
        <end position="90"/>
    </location>
</feature>
<dbReference type="EC" id="2.7.7.6" evidence="1"/>
<dbReference type="EMBL" id="CP001139">
    <property type="protein sequence ID" value="ACH65042.1"/>
    <property type="molecule type" value="Genomic_DNA"/>
</dbReference>
<dbReference type="RefSeq" id="WP_005416998.1">
    <property type="nucleotide sequence ID" value="NC_011184.1"/>
</dbReference>
<dbReference type="SMR" id="B5FFD6"/>
<dbReference type="GeneID" id="54162732"/>
<dbReference type="KEGG" id="vfm:VFMJ11_0103"/>
<dbReference type="HOGENOM" id="CLU_125406_5_3_6"/>
<dbReference type="Proteomes" id="UP000001857">
    <property type="component" value="Chromosome I"/>
</dbReference>
<dbReference type="GO" id="GO:0000428">
    <property type="term" value="C:DNA-directed RNA polymerase complex"/>
    <property type="evidence" value="ECO:0007669"/>
    <property type="project" value="UniProtKB-KW"/>
</dbReference>
<dbReference type="GO" id="GO:0003677">
    <property type="term" value="F:DNA binding"/>
    <property type="evidence" value="ECO:0007669"/>
    <property type="project" value="UniProtKB-UniRule"/>
</dbReference>
<dbReference type="GO" id="GO:0003899">
    <property type="term" value="F:DNA-directed RNA polymerase activity"/>
    <property type="evidence" value="ECO:0007669"/>
    <property type="project" value="UniProtKB-UniRule"/>
</dbReference>
<dbReference type="GO" id="GO:0006351">
    <property type="term" value="P:DNA-templated transcription"/>
    <property type="evidence" value="ECO:0007669"/>
    <property type="project" value="UniProtKB-UniRule"/>
</dbReference>
<dbReference type="FunFam" id="3.90.940.10:FF:000001">
    <property type="entry name" value="DNA-directed RNA polymerase subunit omega"/>
    <property type="match status" value="1"/>
</dbReference>
<dbReference type="Gene3D" id="3.90.940.10">
    <property type="match status" value="1"/>
</dbReference>
<dbReference type="HAMAP" id="MF_00366">
    <property type="entry name" value="RNApol_bact_RpoZ"/>
    <property type="match status" value="1"/>
</dbReference>
<dbReference type="InterPro" id="IPR003716">
    <property type="entry name" value="DNA-dir_RNA_pol_omega"/>
</dbReference>
<dbReference type="InterPro" id="IPR006110">
    <property type="entry name" value="Pol_omega/Rpo6/RPB6"/>
</dbReference>
<dbReference type="InterPro" id="IPR036161">
    <property type="entry name" value="RPB6/omega-like_sf"/>
</dbReference>
<dbReference type="NCBIfam" id="TIGR00690">
    <property type="entry name" value="rpoZ"/>
    <property type="match status" value="1"/>
</dbReference>
<dbReference type="PANTHER" id="PTHR34476">
    <property type="entry name" value="DNA-DIRECTED RNA POLYMERASE SUBUNIT OMEGA"/>
    <property type="match status" value="1"/>
</dbReference>
<dbReference type="PANTHER" id="PTHR34476:SF1">
    <property type="entry name" value="DNA-DIRECTED RNA POLYMERASE SUBUNIT OMEGA"/>
    <property type="match status" value="1"/>
</dbReference>
<dbReference type="Pfam" id="PF01192">
    <property type="entry name" value="RNA_pol_Rpb6"/>
    <property type="match status" value="1"/>
</dbReference>
<dbReference type="SMART" id="SM01409">
    <property type="entry name" value="RNA_pol_Rpb6"/>
    <property type="match status" value="1"/>
</dbReference>
<dbReference type="SUPFAM" id="SSF63562">
    <property type="entry name" value="RPB6/omega subunit-like"/>
    <property type="match status" value="1"/>
</dbReference>
<sequence>MARVTVQDAVEKIGNRFDLVLISSRRARQMQTGGKDALVPEENDKTTVIALREIEEGLITKELLDARERQEQQEQDAAELAAVSSITHNR</sequence>
<proteinExistence type="inferred from homology"/>